<dbReference type="EC" id="3.2.2.27" evidence="1"/>
<dbReference type="EMBL" id="CP000926">
    <property type="protein sequence ID" value="ABZ00286.1"/>
    <property type="molecule type" value="Genomic_DNA"/>
</dbReference>
<dbReference type="RefSeq" id="WP_012273947.1">
    <property type="nucleotide sequence ID" value="NC_010322.1"/>
</dbReference>
<dbReference type="SMR" id="B0KV50"/>
<dbReference type="KEGG" id="ppg:PputGB1_4397"/>
<dbReference type="eggNOG" id="COG0692">
    <property type="taxonomic scope" value="Bacteria"/>
</dbReference>
<dbReference type="HOGENOM" id="CLU_032162_3_1_6"/>
<dbReference type="Proteomes" id="UP000002157">
    <property type="component" value="Chromosome"/>
</dbReference>
<dbReference type="GO" id="GO:0005737">
    <property type="term" value="C:cytoplasm"/>
    <property type="evidence" value="ECO:0007669"/>
    <property type="project" value="UniProtKB-SubCell"/>
</dbReference>
<dbReference type="GO" id="GO:0004844">
    <property type="term" value="F:uracil DNA N-glycosylase activity"/>
    <property type="evidence" value="ECO:0007669"/>
    <property type="project" value="UniProtKB-UniRule"/>
</dbReference>
<dbReference type="GO" id="GO:0097510">
    <property type="term" value="P:base-excision repair, AP site formation via deaminated base removal"/>
    <property type="evidence" value="ECO:0007669"/>
    <property type="project" value="TreeGrafter"/>
</dbReference>
<dbReference type="CDD" id="cd10027">
    <property type="entry name" value="UDG-F1-like"/>
    <property type="match status" value="1"/>
</dbReference>
<dbReference type="FunFam" id="3.40.470.10:FF:000001">
    <property type="entry name" value="Uracil-DNA glycosylase"/>
    <property type="match status" value="1"/>
</dbReference>
<dbReference type="Gene3D" id="3.40.470.10">
    <property type="entry name" value="Uracil-DNA glycosylase-like domain"/>
    <property type="match status" value="1"/>
</dbReference>
<dbReference type="HAMAP" id="MF_00148">
    <property type="entry name" value="UDG"/>
    <property type="match status" value="1"/>
</dbReference>
<dbReference type="InterPro" id="IPR002043">
    <property type="entry name" value="UDG_fam1"/>
</dbReference>
<dbReference type="InterPro" id="IPR018085">
    <property type="entry name" value="Ura-DNA_Glyclase_AS"/>
</dbReference>
<dbReference type="InterPro" id="IPR005122">
    <property type="entry name" value="Uracil-DNA_glycosylase-like"/>
</dbReference>
<dbReference type="InterPro" id="IPR036895">
    <property type="entry name" value="Uracil-DNA_glycosylase-like_sf"/>
</dbReference>
<dbReference type="NCBIfam" id="NF003588">
    <property type="entry name" value="PRK05254.1-1"/>
    <property type="match status" value="1"/>
</dbReference>
<dbReference type="NCBIfam" id="NF003589">
    <property type="entry name" value="PRK05254.1-2"/>
    <property type="match status" value="1"/>
</dbReference>
<dbReference type="NCBIfam" id="NF003591">
    <property type="entry name" value="PRK05254.1-4"/>
    <property type="match status" value="1"/>
</dbReference>
<dbReference type="NCBIfam" id="NF003592">
    <property type="entry name" value="PRK05254.1-5"/>
    <property type="match status" value="1"/>
</dbReference>
<dbReference type="NCBIfam" id="TIGR00628">
    <property type="entry name" value="ung"/>
    <property type="match status" value="1"/>
</dbReference>
<dbReference type="PANTHER" id="PTHR11264">
    <property type="entry name" value="URACIL-DNA GLYCOSYLASE"/>
    <property type="match status" value="1"/>
</dbReference>
<dbReference type="PANTHER" id="PTHR11264:SF0">
    <property type="entry name" value="URACIL-DNA GLYCOSYLASE"/>
    <property type="match status" value="1"/>
</dbReference>
<dbReference type="Pfam" id="PF03167">
    <property type="entry name" value="UDG"/>
    <property type="match status" value="1"/>
</dbReference>
<dbReference type="SMART" id="SM00986">
    <property type="entry name" value="UDG"/>
    <property type="match status" value="1"/>
</dbReference>
<dbReference type="SMART" id="SM00987">
    <property type="entry name" value="UreE_C"/>
    <property type="match status" value="1"/>
</dbReference>
<dbReference type="SUPFAM" id="SSF52141">
    <property type="entry name" value="Uracil-DNA glycosylase-like"/>
    <property type="match status" value="1"/>
</dbReference>
<dbReference type="PROSITE" id="PS00130">
    <property type="entry name" value="U_DNA_GLYCOSYLASE"/>
    <property type="match status" value="1"/>
</dbReference>
<proteinExistence type="inferred from homology"/>
<sequence>MTDDDRIKLEPSWKAALRGEFDQPYMHQLREFLRGEYAAGKEIYPPGPLIFNALNSTPLDQVKVVILGQDPYHGPGQAHGLCFSVQPGVATPPSLVNIYKELQRDLNIPIASHGYLQSWAEQGVLLLNTTMTVERANAASHAKKGWEFFTDRVIQVVSEQCPNVVFLLWGAHAQSKQKLIDGTKHLVLKSVHPSPLSAYRGFLGCGHFSRTNSFLEQRGMAPINWALPPL</sequence>
<gene>
    <name evidence="1" type="primary">ung</name>
    <name type="ordered locus">PputGB1_4397</name>
</gene>
<accession>B0KV50</accession>
<reference key="1">
    <citation type="submission" date="2008-01" db="EMBL/GenBank/DDBJ databases">
        <title>Complete sequence of Pseudomonas putida GB-1.</title>
        <authorList>
            <consortium name="US DOE Joint Genome Institute"/>
            <person name="Copeland A."/>
            <person name="Lucas S."/>
            <person name="Lapidus A."/>
            <person name="Barry K."/>
            <person name="Glavina del Rio T."/>
            <person name="Dalin E."/>
            <person name="Tice H."/>
            <person name="Pitluck S."/>
            <person name="Bruce D."/>
            <person name="Goodwin L."/>
            <person name="Chertkov O."/>
            <person name="Brettin T."/>
            <person name="Detter J.C."/>
            <person name="Han C."/>
            <person name="Kuske C.R."/>
            <person name="Schmutz J."/>
            <person name="Larimer F."/>
            <person name="Land M."/>
            <person name="Hauser L."/>
            <person name="Kyrpides N."/>
            <person name="Kim E."/>
            <person name="McCarthy J.K."/>
            <person name="Richardson P."/>
        </authorList>
    </citation>
    <scope>NUCLEOTIDE SEQUENCE [LARGE SCALE GENOMIC DNA]</scope>
    <source>
        <strain>GB-1</strain>
    </source>
</reference>
<evidence type="ECO:0000255" key="1">
    <source>
        <dbReference type="HAMAP-Rule" id="MF_00148"/>
    </source>
</evidence>
<protein>
    <recommendedName>
        <fullName evidence="1">Uracil-DNA glycosylase</fullName>
        <shortName evidence="1">UDG</shortName>
        <ecNumber evidence="1">3.2.2.27</ecNumber>
    </recommendedName>
</protein>
<comment type="function">
    <text evidence="1">Excises uracil residues from the DNA which can arise as a result of misincorporation of dUMP residues by DNA polymerase or due to deamination of cytosine.</text>
</comment>
<comment type="catalytic activity">
    <reaction evidence="1">
        <text>Hydrolyzes single-stranded DNA or mismatched double-stranded DNA and polynucleotides, releasing free uracil.</text>
        <dbReference type="EC" id="3.2.2.27"/>
    </reaction>
</comment>
<comment type="subcellular location">
    <subcellularLocation>
        <location evidence="1">Cytoplasm</location>
    </subcellularLocation>
</comment>
<comment type="similarity">
    <text evidence="1">Belongs to the uracil-DNA glycosylase (UDG) superfamily. UNG family.</text>
</comment>
<feature type="chain" id="PRO_1000076677" description="Uracil-DNA glycosylase">
    <location>
        <begin position="1"/>
        <end position="230"/>
    </location>
</feature>
<feature type="active site" description="Proton acceptor" evidence="1">
    <location>
        <position position="70"/>
    </location>
</feature>
<keyword id="KW-0963">Cytoplasm</keyword>
<keyword id="KW-0227">DNA damage</keyword>
<keyword id="KW-0234">DNA repair</keyword>
<keyword id="KW-0378">Hydrolase</keyword>
<name>UNG_PSEPG</name>
<organism>
    <name type="scientific">Pseudomonas putida (strain GB-1)</name>
    <dbReference type="NCBI Taxonomy" id="76869"/>
    <lineage>
        <taxon>Bacteria</taxon>
        <taxon>Pseudomonadati</taxon>
        <taxon>Pseudomonadota</taxon>
        <taxon>Gammaproteobacteria</taxon>
        <taxon>Pseudomonadales</taxon>
        <taxon>Pseudomonadaceae</taxon>
        <taxon>Pseudomonas</taxon>
    </lineage>
</organism>